<evidence type="ECO:0000255" key="1">
    <source>
        <dbReference type="HAMAP-Rule" id="MF_00075"/>
    </source>
</evidence>
<proteinExistence type="inferred from homology"/>
<feature type="chain" id="PRO_0000095742" description="Translation initiation factor IF-1">
    <location>
        <begin position="1"/>
        <end position="72"/>
    </location>
</feature>
<feature type="domain" description="S1-like" evidence="1">
    <location>
        <begin position="1"/>
        <end position="72"/>
    </location>
</feature>
<gene>
    <name evidence="1" type="primary">infA</name>
    <name type="ordered locus">BL1602</name>
</gene>
<keyword id="KW-0963">Cytoplasm</keyword>
<keyword id="KW-0396">Initiation factor</keyword>
<keyword id="KW-0648">Protein biosynthesis</keyword>
<keyword id="KW-1185">Reference proteome</keyword>
<keyword id="KW-0694">RNA-binding</keyword>
<keyword id="KW-0699">rRNA-binding</keyword>
<protein>
    <recommendedName>
        <fullName evidence="1">Translation initiation factor IF-1</fullName>
    </recommendedName>
</protein>
<name>IF1_BIFLO</name>
<accession>Q8G3Z7</accession>
<comment type="function">
    <text evidence="1">One of the essential components for the initiation of protein synthesis. Stabilizes the binding of IF-2 and IF-3 on the 30S subunit to which N-formylmethionyl-tRNA(fMet) subsequently binds. Helps modulate mRNA selection, yielding the 30S pre-initiation complex (PIC). Upon addition of the 50S ribosomal subunit IF-1, IF-2 and IF-3 are released leaving the mature 70S translation initiation complex.</text>
</comment>
<comment type="subunit">
    <text evidence="1">Component of the 30S ribosomal translation pre-initiation complex which assembles on the 30S ribosome in the order IF-2 and IF-3, IF-1 and N-formylmethionyl-tRNA(fMet); mRNA recruitment can occur at any time during PIC assembly.</text>
</comment>
<comment type="subcellular location">
    <subcellularLocation>
        <location evidence="1">Cytoplasm</location>
    </subcellularLocation>
</comment>
<comment type="similarity">
    <text evidence="1">Belongs to the IF-1 family.</text>
</comment>
<reference key="1">
    <citation type="journal article" date="2002" name="Proc. Natl. Acad. Sci. U.S.A.">
        <title>The genome sequence of Bifidobacterium longum reflects its adaptation to the human gastrointestinal tract.</title>
        <authorList>
            <person name="Schell M.A."/>
            <person name="Karmirantzou M."/>
            <person name="Snel B."/>
            <person name="Vilanova D."/>
            <person name="Berger B."/>
            <person name="Pessi G."/>
            <person name="Zwahlen M.-C."/>
            <person name="Desiere F."/>
            <person name="Bork P."/>
            <person name="Delley M."/>
            <person name="Pridmore R.D."/>
            <person name="Arigoni F."/>
        </authorList>
    </citation>
    <scope>NUCLEOTIDE SEQUENCE [LARGE SCALE GENOMIC DNA]</scope>
    <source>
        <strain>NCC 2705</strain>
    </source>
</reference>
<dbReference type="EMBL" id="AE014295">
    <property type="protein sequence ID" value="AAN25391.1"/>
    <property type="molecule type" value="Genomic_DNA"/>
</dbReference>
<dbReference type="RefSeq" id="NP_696755.1">
    <property type="nucleotide sequence ID" value="NC_004307.2"/>
</dbReference>
<dbReference type="RefSeq" id="WP_003808114.1">
    <property type="nucleotide sequence ID" value="NC_004307.2"/>
</dbReference>
<dbReference type="SMR" id="Q8G3Z7"/>
<dbReference type="STRING" id="206672.BL1602"/>
<dbReference type="EnsemblBacteria" id="AAN25391">
    <property type="protein sequence ID" value="AAN25391"/>
    <property type="gene ID" value="BL1602"/>
</dbReference>
<dbReference type="GeneID" id="97501887"/>
<dbReference type="KEGG" id="blo:BL1602"/>
<dbReference type="PATRIC" id="fig|206672.9.peg.1657"/>
<dbReference type="HOGENOM" id="CLU_151267_1_0_11"/>
<dbReference type="OrthoDB" id="9803250at2"/>
<dbReference type="PhylomeDB" id="Q8G3Z7"/>
<dbReference type="PRO" id="PR:Q8G3Z7"/>
<dbReference type="Proteomes" id="UP000000439">
    <property type="component" value="Chromosome"/>
</dbReference>
<dbReference type="GO" id="GO:0005829">
    <property type="term" value="C:cytosol"/>
    <property type="evidence" value="ECO:0007669"/>
    <property type="project" value="TreeGrafter"/>
</dbReference>
<dbReference type="GO" id="GO:0043022">
    <property type="term" value="F:ribosome binding"/>
    <property type="evidence" value="ECO:0007669"/>
    <property type="project" value="UniProtKB-UniRule"/>
</dbReference>
<dbReference type="GO" id="GO:0019843">
    <property type="term" value="F:rRNA binding"/>
    <property type="evidence" value="ECO:0007669"/>
    <property type="project" value="UniProtKB-UniRule"/>
</dbReference>
<dbReference type="GO" id="GO:0003743">
    <property type="term" value="F:translation initiation factor activity"/>
    <property type="evidence" value="ECO:0007669"/>
    <property type="project" value="UniProtKB-UniRule"/>
</dbReference>
<dbReference type="CDD" id="cd04451">
    <property type="entry name" value="S1_IF1"/>
    <property type="match status" value="1"/>
</dbReference>
<dbReference type="FunFam" id="2.40.50.140:FF:000002">
    <property type="entry name" value="Translation initiation factor IF-1"/>
    <property type="match status" value="1"/>
</dbReference>
<dbReference type="Gene3D" id="2.40.50.140">
    <property type="entry name" value="Nucleic acid-binding proteins"/>
    <property type="match status" value="1"/>
</dbReference>
<dbReference type="HAMAP" id="MF_00075">
    <property type="entry name" value="IF_1"/>
    <property type="match status" value="1"/>
</dbReference>
<dbReference type="InterPro" id="IPR012340">
    <property type="entry name" value="NA-bd_OB-fold"/>
</dbReference>
<dbReference type="InterPro" id="IPR006196">
    <property type="entry name" value="RNA-binding_domain_S1_IF1"/>
</dbReference>
<dbReference type="InterPro" id="IPR004368">
    <property type="entry name" value="TIF_IF1"/>
</dbReference>
<dbReference type="NCBIfam" id="TIGR00008">
    <property type="entry name" value="infA"/>
    <property type="match status" value="1"/>
</dbReference>
<dbReference type="PANTHER" id="PTHR33370">
    <property type="entry name" value="TRANSLATION INITIATION FACTOR IF-1, CHLOROPLASTIC"/>
    <property type="match status" value="1"/>
</dbReference>
<dbReference type="PANTHER" id="PTHR33370:SF1">
    <property type="entry name" value="TRANSLATION INITIATION FACTOR IF-1, CHLOROPLASTIC"/>
    <property type="match status" value="1"/>
</dbReference>
<dbReference type="Pfam" id="PF01176">
    <property type="entry name" value="eIF-1a"/>
    <property type="match status" value="1"/>
</dbReference>
<dbReference type="SUPFAM" id="SSF50249">
    <property type="entry name" value="Nucleic acid-binding proteins"/>
    <property type="match status" value="1"/>
</dbReference>
<dbReference type="PROSITE" id="PS50832">
    <property type="entry name" value="S1_IF1_TYPE"/>
    <property type="match status" value="1"/>
</dbReference>
<organism>
    <name type="scientific">Bifidobacterium longum (strain NCC 2705)</name>
    <dbReference type="NCBI Taxonomy" id="206672"/>
    <lineage>
        <taxon>Bacteria</taxon>
        <taxon>Bacillati</taxon>
        <taxon>Actinomycetota</taxon>
        <taxon>Actinomycetes</taxon>
        <taxon>Bifidobacteriales</taxon>
        <taxon>Bifidobacteriaceae</taxon>
        <taxon>Bifidobacterium</taxon>
    </lineage>
</organism>
<sequence length="72" mass="8378">MAKDGVIEVEGQVVEALPNAMFRVELENKHIVLATISGKMRKNYIRILPQDRVVLEMSPYDLNRGRITYRYK</sequence>